<accession>P66017</accession>
<accession>A0A1R3XXZ1</accession>
<accession>Q10605</accession>
<accession>X2BHP1</accession>
<comment type="function">
    <text evidence="1">Peptide chain release factor 1 directs the termination of translation in response to the peptide chain termination codons UAG and UAA.</text>
</comment>
<comment type="subcellular location">
    <subcellularLocation>
        <location evidence="1">Cytoplasm</location>
    </subcellularLocation>
</comment>
<comment type="PTM">
    <text evidence="1">Methylated by PrmC. Methylation increases the termination efficiency of RF1 (By similarity).</text>
</comment>
<comment type="similarity">
    <text evidence="2">Belongs to the prokaryotic/mitochondrial release factor family.</text>
</comment>
<proteinExistence type="inferred from homology"/>
<feature type="chain" id="PRO_0000177699" description="Peptide chain release factor 1">
    <location>
        <begin position="1"/>
        <end position="357"/>
    </location>
</feature>
<feature type="modified residue" description="N5-methylglutamine" evidence="1">
    <location>
        <position position="236"/>
    </location>
</feature>
<protein>
    <recommendedName>
        <fullName>Peptide chain release factor 1</fullName>
        <shortName>RF-1</shortName>
    </recommendedName>
</protein>
<keyword id="KW-0963">Cytoplasm</keyword>
<keyword id="KW-0488">Methylation</keyword>
<keyword id="KW-0648">Protein biosynthesis</keyword>
<keyword id="KW-1185">Reference proteome</keyword>
<reference key="1">
    <citation type="journal article" date="2003" name="Proc. Natl. Acad. Sci. U.S.A.">
        <title>The complete genome sequence of Mycobacterium bovis.</title>
        <authorList>
            <person name="Garnier T."/>
            <person name="Eiglmeier K."/>
            <person name="Camus J.-C."/>
            <person name="Medina N."/>
            <person name="Mansoor H."/>
            <person name="Pryor M."/>
            <person name="Duthoy S."/>
            <person name="Grondin S."/>
            <person name="Lacroix C."/>
            <person name="Monsempe C."/>
            <person name="Simon S."/>
            <person name="Harris B."/>
            <person name="Atkin R."/>
            <person name="Doggett J."/>
            <person name="Mayes R."/>
            <person name="Keating L."/>
            <person name="Wheeler P.R."/>
            <person name="Parkhill J."/>
            <person name="Barrell B.G."/>
            <person name="Cole S.T."/>
            <person name="Gordon S.V."/>
            <person name="Hewinson R.G."/>
        </authorList>
    </citation>
    <scope>NUCLEOTIDE SEQUENCE [LARGE SCALE GENOMIC DNA]</scope>
    <source>
        <strain>ATCC BAA-935 / AF2122/97</strain>
    </source>
</reference>
<reference key="2">
    <citation type="journal article" date="2017" name="Genome Announc.">
        <title>Updated reference genome sequence and annotation of Mycobacterium bovis AF2122/97.</title>
        <authorList>
            <person name="Malone K.M."/>
            <person name="Farrell D."/>
            <person name="Stuber T.P."/>
            <person name="Schubert O.T."/>
            <person name="Aebersold R."/>
            <person name="Robbe-Austerman S."/>
            <person name="Gordon S.V."/>
        </authorList>
    </citation>
    <scope>NUCLEOTIDE SEQUENCE [LARGE SCALE GENOMIC DNA]</scope>
    <scope>GENOME REANNOTATION</scope>
    <source>
        <strain>ATCC BAA-935 / AF2122/97</strain>
    </source>
</reference>
<name>RF1_MYCBO</name>
<gene>
    <name type="primary">prfA</name>
    <name type="ordered locus">BQ2027_MB1331</name>
</gene>
<evidence type="ECO:0000250" key="1"/>
<evidence type="ECO:0000305" key="2"/>
<sequence length="357" mass="39036">MTQPVQTIDVLLAEHAELELALADPALHSNPAEARRVGRRFARLAPIVATHRKLTSARDDLETARELVASDESFAAEVAALEARVGELDAQLTDMLAPRDPHDADDIVLEVKSGEGGEESALFAADLARMYIRYAERHGWAVTVLDETTSDLGGYKDATLAIASKADTPDGVWSRMKFEGGVHRVQRVPVTESQGRVHTSAAGVLVYPEPEEVGQVQIDESDLRIDVFRSSGKGGQGVNTTDSAVRITHLPTGIVVTCQNERSQLQNKTRALQVLAARLQAMAEEQALADASADRASQIRTVDRSERIRTYNFPENRITDHRIGYKSHNLDQVLDGDLDALFDALSAADKQSRLRQS</sequence>
<organism>
    <name type="scientific">Mycobacterium bovis (strain ATCC BAA-935 / AF2122/97)</name>
    <dbReference type="NCBI Taxonomy" id="233413"/>
    <lineage>
        <taxon>Bacteria</taxon>
        <taxon>Bacillati</taxon>
        <taxon>Actinomycetota</taxon>
        <taxon>Actinomycetes</taxon>
        <taxon>Mycobacteriales</taxon>
        <taxon>Mycobacteriaceae</taxon>
        <taxon>Mycobacterium</taxon>
        <taxon>Mycobacterium tuberculosis complex</taxon>
    </lineage>
</organism>
<dbReference type="EMBL" id="LT708304">
    <property type="protein sequence ID" value="SIT99934.1"/>
    <property type="molecule type" value="Genomic_DNA"/>
</dbReference>
<dbReference type="RefSeq" id="NP_854985.1">
    <property type="nucleotide sequence ID" value="NC_002945.3"/>
</dbReference>
<dbReference type="RefSeq" id="WP_003406670.1">
    <property type="nucleotide sequence ID" value="NC_002945.4"/>
</dbReference>
<dbReference type="SMR" id="P66017"/>
<dbReference type="GeneID" id="45425273"/>
<dbReference type="KEGG" id="mbo:BQ2027_MB1331"/>
<dbReference type="PATRIC" id="fig|233413.5.peg.1459"/>
<dbReference type="Proteomes" id="UP000001419">
    <property type="component" value="Chromosome"/>
</dbReference>
<dbReference type="GO" id="GO:0005737">
    <property type="term" value="C:cytoplasm"/>
    <property type="evidence" value="ECO:0007669"/>
    <property type="project" value="UniProtKB-SubCell"/>
</dbReference>
<dbReference type="GO" id="GO:0016149">
    <property type="term" value="F:translation release factor activity, codon specific"/>
    <property type="evidence" value="ECO:0007669"/>
    <property type="project" value="UniProtKB-UniRule"/>
</dbReference>
<dbReference type="FunFam" id="3.30.160.20:FF:000004">
    <property type="entry name" value="Peptide chain release factor 1"/>
    <property type="match status" value="1"/>
</dbReference>
<dbReference type="Gene3D" id="3.30.160.20">
    <property type="match status" value="1"/>
</dbReference>
<dbReference type="Gene3D" id="3.30.70.1660">
    <property type="match status" value="1"/>
</dbReference>
<dbReference type="Gene3D" id="6.10.140.1950">
    <property type="match status" value="1"/>
</dbReference>
<dbReference type="HAMAP" id="MF_00093">
    <property type="entry name" value="Rel_fac_1"/>
    <property type="match status" value="1"/>
</dbReference>
<dbReference type="InterPro" id="IPR005139">
    <property type="entry name" value="PCRF"/>
</dbReference>
<dbReference type="InterPro" id="IPR000352">
    <property type="entry name" value="Pep_chain_release_fac_I"/>
</dbReference>
<dbReference type="InterPro" id="IPR045853">
    <property type="entry name" value="Pep_chain_release_fac_I_sf"/>
</dbReference>
<dbReference type="InterPro" id="IPR050057">
    <property type="entry name" value="Prokaryotic/Mito_RF"/>
</dbReference>
<dbReference type="InterPro" id="IPR004373">
    <property type="entry name" value="RF-1"/>
</dbReference>
<dbReference type="NCBIfam" id="TIGR00019">
    <property type="entry name" value="prfA"/>
    <property type="match status" value="1"/>
</dbReference>
<dbReference type="NCBIfam" id="NF001859">
    <property type="entry name" value="PRK00591.1"/>
    <property type="match status" value="1"/>
</dbReference>
<dbReference type="PANTHER" id="PTHR43804">
    <property type="entry name" value="LD18447P"/>
    <property type="match status" value="1"/>
</dbReference>
<dbReference type="PANTHER" id="PTHR43804:SF7">
    <property type="entry name" value="LD18447P"/>
    <property type="match status" value="1"/>
</dbReference>
<dbReference type="Pfam" id="PF03462">
    <property type="entry name" value="PCRF"/>
    <property type="match status" value="1"/>
</dbReference>
<dbReference type="Pfam" id="PF00472">
    <property type="entry name" value="RF-1"/>
    <property type="match status" value="1"/>
</dbReference>
<dbReference type="SMART" id="SM00937">
    <property type="entry name" value="PCRF"/>
    <property type="match status" value="1"/>
</dbReference>
<dbReference type="SUPFAM" id="SSF75620">
    <property type="entry name" value="Release factor"/>
    <property type="match status" value="1"/>
</dbReference>
<dbReference type="PROSITE" id="PS00745">
    <property type="entry name" value="RF_PROK_I"/>
    <property type="match status" value="1"/>
</dbReference>